<accession>Q20WN5</accession>
<evidence type="ECO:0000255" key="1">
    <source>
        <dbReference type="HAMAP-Rule" id="MF_00505"/>
    </source>
</evidence>
<comment type="function">
    <text evidence="1">Molecular chaperone. Has ATPase activity.</text>
</comment>
<comment type="subunit">
    <text evidence="1">Homodimer.</text>
</comment>
<comment type="subcellular location">
    <subcellularLocation>
        <location evidence="1">Cytoplasm</location>
    </subcellularLocation>
</comment>
<comment type="similarity">
    <text evidence="1">Belongs to the heat shock protein 90 family.</text>
</comment>
<proteinExistence type="inferred from homology"/>
<sequence length="620" mass="68213">MTTTDTAPQSQPFQAEVAELLNLMVHSVYSETDIFLRELISNASDALDKLRYESIAKPELMADGGEPKIRILPKKEPDTLSVIDNGLGMDRQELIDNLGTIAKSGTKSFLTKLTEAKDGAGLIGQFGVGFYAAFMVADRIVVTSRRARSAEAWTWSSSGGAGFEIAPASEEDAARVTRGTEIVLHLKKDAAKYLEPYEIERVVGAYSDNIQFPIELVPEEGEPRQINSASALWQRSKSELTAEDYSQAYKQIAGAFDEPAMTLHYRAEGRYSYAVLLFAPSTKPFDLFEPARKGRVKLYVRRVFITDEADLLPSYLRFIRGVIDSEDLPLNLSREMLQNNPQLAQIRKAVTGKVIGELESLGDKDPEAFGKIWDAFGLVIKEGIWEDYERRDKLLALSRFTTTKGENRTLKQYVEDLKENQTEIYYLVGDSIERLKSNPKLESAAARGIEVLLLTDPVDAFWTSAPLDFGGKPLKSLSQGDVDFGQIPTTEENKDEQAKPETDEALTIAAIKDALGDKVSDVRASQRLTASASCLVAGGLGPDRALERMLAQQNRGAASKPILEVNLRHPIVAAVAKANAADAADLSLLLLEQAQILDGELPEDPAAFSARLNRLVLRAL</sequence>
<protein>
    <recommendedName>
        <fullName evidence="1">Chaperone protein HtpG</fullName>
    </recommendedName>
    <alternativeName>
        <fullName evidence="1">Heat shock protein HtpG</fullName>
    </alternativeName>
    <alternativeName>
        <fullName evidence="1">High temperature protein G</fullName>
    </alternativeName>
</protein>
<feature type="chain" id="PRO_0000258523" description="Chaperone protein HtpG">
    <location>
        <begin position="1"/>
        <end position="620"/>
    </location>
</feature>
<feature type="region of interest" description="A; substrate-binding" evidence="1">
    <location>
        <begin position="1"/>
        <end position="334"/>
    </location>
</feature>
<feature type="region of interest" description="B" evidence="1">
    <location>
        <begin position="335"/>
        <end position="548"/>
    </location>
</feature>
<feature type="region of interest" description="C" evidence="1">
    <location>
        <begin position="549"/>
        <end position="620"/>
    </location>
</feature>
<gene>
    <name evidence="1" type="primary">htpG</name>
    <name type="ordered locus">RPC_4929</name>
</gene>
<dbReference type="EMBL" id="CP000301">
    <property type="protein sequence ID" value="ABD90451.1"/>
    <property type="molecule type" value="Genomic_DNA"/>
</dbReference>
<dbReference type="SMR" id="Q20WN5"/>
<dbReference type="STRING" id="316056.RPC_4929"/>
<dbReference type="KEGG" id="rpc:RPC_4929"/>
<dbReference type="eggNOG" id="COG0326">
    <property type="taxonomic scope" value="Bacteria"/>
</dbReference>
<dbReference type="HOGENOM" id="CLU_006684_3_0_5"/>
<dbReference type="OrthoDB" id="9802640at2"/>
<dbReference type="GO" id="GO:0005737">
    <property type="term" value="C:cytoplasm"/>
    <property type="evidence" value="ECO:0007669"/>
    <property type="project" value="UniProtKB-SubCell"/>
</dbReference>
<dbReference type="GO" id="GO:0005524">
    <property type="term" value="F:ATP binding"/>
    <property type="evidence" value="ECO:0007669"/>
    <property type="project" value="UniProtKB-UniRule"/>
</dbReference>
<dbReference type="GO" id="GO:0016887">
    <property type="term" value="F:ATP hydrolysis activity"/>
    <property type="evidence" value="ECO:0007669"/>
    <property type="project" value="InterPro"/>
</dbReference>
<dbReference type="GO" id="GO:0140662">
    <property type="term" value="F:ATP-dependent protein folding chaperone"/>
    <property type="evidence" value="ECO:0007669"/>
    <property type="project" value="InterPro"/>
</dbReference>
<dbReference type="GO" id="GO:0051082">
    <property type="term" value="F:unfolded protein binding"/>
    <property type="evidence" value="ECO:0007669"/>
    <property type="project" value="UniProtKB-UniRule"/>
</dbReference>
<dbReference type="CDD" id="cd16927">
    <property type="entry name" value="HATPase_Hsp90-like"/>
    <property type="match status" value="1"/>
</dbReference>
<dbReference type="FunFam" id="3.30.565.10:FF:000357">
    <property type="entry name" value="Heat shock protein HSP 90-beta"/>
    <property type="match status" value="1"/>
</dbReference>
<dbReference type="Gene3D" id="3.30.230.80">
    <property type="match status" value="1"/>
</dbReference>
<dbReference type="Gene3D" id="3.40.50.11260">
    <property type="match status" value="1"/>
</dbReference>
<dbReference type="Gene3D" id="1.20.120.790">
    <property type="entry name" value="Heat shock protein 90, C-terminal domain"/>
    <property type="match status" value="1"/>
</dbReference>
<dbReference type="Gene3D" id="3.30.565.10">
    <property type="entry name" value="Histidine kinase-like ATPase, C-terminal domain"/>
    <property type="match status" value="1"/>
</dbReference>
<dbReference type="HAMAP" id="MF_00505">
    <property type="entry name" value="HSP90"/>
    <property type="match status" value="1"/>
</dbReference>
<dbReference type="InterPro" id="IPR036890">
    <property type="entry name" value="HATPase_C_sf"/>
</dbReference>
<dbReference type="InterPro" id="IPR037196">
    <property type="entry name" value="HSP90_C"/>
</dbReference>
<dbReference type="InterPro" id="IPR001404">
    <property type="entry name" value="Hsp90_fam"/>
</dbReference>
<dbReference type="InterPro" id="IPR020575">
    <property type="entry name" value="Hsp90_N"/>
</dbReference>
<dbReference type="InterPro" id="IPR020568">
    <property type="entry name" value="Ribosomal_Su5_D2-typ_SF"/>
</dbReference>
<dbReference type="NCBIfam" id="NF003555">
    <property type="entry name" value="PRK05218.1"/>
    <property type="match status" value="1"/>
</dbReference>
<dbReference type="PANTHER" id="PTHR11528">
    <property type="entry name" value="HEAT SHOCK PROTEIN 90 FAMILY MEMBER"/>
    <property type="match status" value="1"/>
</dbReference>
<dbReference type="Pfam" id="PF13589">
    <property type="entry name" value="HATPase_c_3"/>
    <property type="match status" value="1"/>
</dbReference>
<dbReference type="Pfam" id="PF00183">
    <property type="entry name" value="HSP90"/>
    <property type="match status" value="1"/>
</dbReference>
<dbReference type="PIRSF" id="PIRSF002583">
    <property type="entry name" value="Hsp90"/>
    <property type="match status" value="1"/>
</dbReference>
<dbReference type="PRINTS" id="PR00775">
    <property type="entry name" value="HEATSHOCK90"/>
</dbReference>
<dbReference type="SMART" id="SM00387">
    <property type="entry name" value="HATPase_c"/>
    <property type="match status" value="1"/>
</dbReference>
<dbReference type="SUPFAM" id="SSF55874">
    <property type="entry name" value="ATPase domain of HSP90 chaperone/DNA topoisomerase II/histidine kinase"/>
    <property type="match status" value="1"/>
</dbReference>
<dbReference type="SUPFAM" id="SSF110942">
    <property type="entry name" value="HSP90 C-terminal domain"/>
    <property type="match status" value="1"/>
</dbReference>
<dbReference type="SUPFAM" id="SSF54211">
    <property type="entry name" value="Ribosomal protein S5 domain 2-like"/>
    <property type="match status" value="1"/>
</dbReference>
<organism>
    <name type="scientific">Rhodopseudomonas palustris (strain BisB18)</name>
    <dbReference type="NCBI Taxonomy" id="316056"/>
    <lineage>
        <taxon>Bacteria</taxon>
        <taxon>Pseudomonadati</taxon>
        <taxon>Pseudomonadota</taxon>
        <taxon>Alphaproteobacteria</taxon>
        <taxon>Hyphomicrobiales</taxon>
        <taxon>Nitrobacteraceae</taxon>
        <taxon>Rhodopseudomonas</taxon>
    </lineage>
</organism>
<name>HTPG_RHOPB</name>
<reference key="1">
    <citation type="submission" date="2006-03" db="EMBL/GenBank/DDBJ databases">
        <title>Complete sequence of Rhodopseudomonas palustris BisB18.</title>
        <authorList>
            <consortium name="US DOE Joint Genome Institute"/>
            <person name="Copeland A."/>
            <person name="Lucas S."/>
            <person name="Lapidus A."/>
            <person name="Barry K."/>
            <person name="Detter J.C."/>
            <person name="Glavina del Rio T."/>
            <person name="Hammon N."/>
            <person name="Israni S."/>
            <person name="Dalin E."/>
            <person name="Tice H."/>
            <person name="Pitluck S."/>
            <person name="Chain P."/>
            <person name="Malfatti S."/>
            <person name="Shin M."/>
            <person name="Vergez L."/>
            <person name="Schmutz J."/>
            <person name="Larimer F."/>
            <person name="Land M."/>
            <person name="Hauser L."/>
            <person name="Pelletier D.A."/>
            <person name="Kyrpides N."/>
            <person name="Anderson I."/>
            <person name="Oda Y."/>
            <person name="Harwood C.S."/>
            <person name="Richardson P."/>
        </authorList>
    </citation>
    <scope>NUCLEOTIDE SEQUENCE [LARGE SCALE GENOMIC DNA]</scope>
    <source>
        <strain>BisB18</strain>
    </source>
</reference>
<keyword id="KW-0067">ATP-binding</keyword>
<keyword id="KW-0143">Chaperone</keyword>
<keyword id="KW-0963">Cytoplasm</keyword>
<keyword id="KW-0547">Nucleotide-binding</keyword>
<keyword id="KW-0346">Stress response</keyword>